<name>RL35A_PYRWO</name>
<feature type="chain" id="PRO_0000192814" description="Large ribosomal subunit protein eL33">
    <location>
        <begin position="1"/>
        <end position="87"/>
    </location>
</feature>
<protein>
    <recommendedName>
        <fullName evidence="1">Large ribosomal subunit protein eL33</fullName>
    </recommendedName>
    <alternativeName>
        <fullName evidence="2">50S ribosomal protein L35Ae</fullName>
    </alternativeName>
</protein>
<dbReference type="PIR" id="S10651">
    <property type="entry name" value="QQQYYW"/>
</dbReference>
<dbReference type="BMRB" id="P20299"/>
<dbReference type="SMR" id="P20299"/>
<dbReference type="GO" id="GO:1990904">
    <property type="term" value="C:ribonucleoprotein complex"/>
    <property type="evidence" value="ECO:0007669"/>
    <property type="project" value="UniProtKB-KW"/>
</dbReference>
<dbReference type="GO" id="GO:0005840">
    <property type="term" value="C:ribosome"/>
    <property type="evidence" value="ECO:0007669"/>
    <property type="project" value="UniProtKB-KW"/>
</dbReference>
<dbReference type="GO" id="GO:0003735">
    <property type="term" value="F:structural constituent of ribosome"/>
    <property type="evidence" value="ECO:0007669"/>
    <property type="project" value="InterPro"/>
</dbReference>
<dbReference type="GO" id="GO:0006412">
    <property type="term" value="P:translation"/>
    <property type="evidence" value="ECO:0007669"/>
    <property type="project" value="UniProtKB-UniRule"/>
</dbReference>
<dbReference type="Gene3D" id="2.40.10.190">
    <property type="entry name" value="translation elongation factor selb, chain A, domain 4"/>
    <property type="match status" value="1"/>
</dbReference>
<dbReference type="HAMAP" id="MF_00573">
    <property type="entry name" value="Ribosomal_eL33"/>
    <property type="match status" value="1"/>
</dbReference>
<dbReference type="InterPro" id="IPR001780">
    <property type="entry name" value="Ribosomal_eL33"/>
</dbReference>
<dbReference type="InterPro" id="IPR018266">
    <property type="entry name" value="Ribosomal_eL33_CS"/>
</dbReference>
<dbReference type="InterPro" id="IPR038661">
    <property type="entry name" value="Ribosomal_eL33_sf"/>
</dbReference>
<dbReference type="InterPro" id="IPR009000">
    <property type="entry name" value="Transl_B-barrel_sf"/>
</dbReference>
<dbReference type="NCBIfam" id="NF003326">
    <property type="entry name" value="PRK04337.1"/>
    <property type="match status" value="1"/>
</dbReference>
<dbReference type="PANTHER" id="PTHR10902">
    <property type="entry name" value="60S RIBOSOMAL PROTEIN L35A"/>
    <property type="match status" value="1"/>
</dbReference>
<dbReference type="Pfam" id="PF01247">
    <property type="entry name" value="Ribosomal_L35Ae"/>
    <property type="match status" value="1"/>
</dbReference>
<dbReference type="SUPFAM" id="SSF50447">
    <property type="entry name" value="Translation proteins"/>
    <property type="match status" value="1"/>
</dbReference>
<dbReference type="PROSITE" id="PS01105">
    <property type="entry name" value="RIBOSOMAL_L35AE"/>
    <property type="match status" value="1"/>
</dbReference>
<gene>
    <name evidence="1" type="primary">rpl35ae</name>
</gene>
<evidence type="ECO:0000255" key="1">
    <source>
        <dbReference type="HAMAP-Rule" id="MF_00573"/>
    </source>
</evidence>
<evidence type="ECO:0000305" key="2"/>
<proteinExistence type="inferred from homology"/>
<sequence>MSIKGVVLSYRRSKENQHNNVMIIKPLDVNSREEASKLIGRLVLWKSPSGKILKGKIVRVHGTKGAVRARFEKGLPGQALGDYVEIV</sequence>
<accession>P20299</accession>
<reference key="1">
    <citation type="journal article" date="1990" name="J. Bacteriol.">
        <title>Glyceraldehyde-3-phosphate dehydrogenase from the hyperthermophilic archaebacterium Pyrococcus woesei: characterization of the enzyme, cloning and sequencing of the gene, and expression in Escherichia coli.</title>
        <authorList>
            <person name="Zwickl P."/>
            <person name="Fabry S."/>
            <person name="Bogedain C."/>
            <person name="Haas A."/>
            <person name="Hensel R."/>
        </authorList>
    </citation>
    <scope>NUCLEOTIDE SEQUENCE [GENOMIC DNA]</scope>
    <source>
        <strain>ATCC 49860 / DSM 3773 / JCM 8421 / Vul4</strain>
    </source>
</reference>
<organism>
    <name type="scientific">Pyrococcus woesei</name>
    <dbReference type="NCBI Taxonomy" id="2262"/>
    <lineage>
        <taxon>Archaea</taxon>
        <taxon>Methanobacteriati</taxon>
        <taxon>Methanobacteriota</taxon>
        <taxon>Thermococci</taxon>
        <taxon>Thermococcales</taxon>
        <taxon>Thermococcaceae</taxon>
        <taxon>Pyrococcus</taxon>
    </lineage>
</organism>
<comment type="similarity">
    <text evidence="1">Belongs to the eukaryotic ribosomal protein eL33 family.</text>
</comment>
<keyword id="KW-0687">Ribonucleoprotein</keyword>
<keyword id="KW-0689">Ribosomal protein</keyword>